<dbReference type="EMBL" id="AY667461">
    <property type="protein sequence ID" value="AAW57927.1"/>
    <property type="molecule type" value="Genomic_DNA"/>
</dbReference>
<dbReference type="GO" id="GO:0009507">
    <property type="term" value="C:chloroplast"/>
    <property type="evidence" value="ECO:0007669"/>
    <property type="project" value="UniProtKB-SubCell"/>
</dbReference>
<dbReference type="GO" id="GO:0003723">
    <property type="term" value="F:RNA binding"/>
    <property type="evidence" value="ECO:0007669"/>
    <property type="project" value="UniProtKB-KW"/>
</dbReference>
<dbReference type="GO" id="GO:0006397">
    <property type="term" value="P:mRNA processing"/>
    <property type="evidence" value="ECO:0007669"/>
    <property type="project" value="UniProtKB-KW"/>
</dbReference>
<dbReference type="GO" id="GO:0008380">
    <property type="term" value="P:RNA splicing"/>
    <property type="evidence" value="ECO:0007669"/>
    <property type="project" value="UniProtKB-UniRule"/>
</dbReference>
<dbReference type="GO" id="GO:0008033">
    <property type="term" value="P:tRNA processing"/>
    <property type="evidence" value="ECO:0007669"/>
    <property type="project" value="UniProtKB-KW"/>
</dbReference>
<dbReference type="HAMAP" id="MF_01390">
    <property type="entry name" value="MatK"/>
    <property type="match status" value="1"/>
</dbReference>
<dbReference type="InterPro" id="IPR024937">
    <property type="entry name" value="Domain_X"/>
</dbReference>
<dbReference type="InterPro" id="IPR002866">
    <property type="entry name" value="Maturase_MatK"/>
</dbReference>
<dbReference type="InterPro" id="IPR024942">
    <property type="entry name" value="Maturase_MatK_N"/>
</dbReference>
<dbReference type="PANTHER" id="PTHR34811">
    <property type="entry name" value="MATURASE K"/>
    <property type="match status" value="1"/>
</dbReference>
<dbReference type="PANTHER" id="PTHR34811:SF1">
    <property type="entry name" value="MATURASE K"/>
    <property type="match status" value="1"/>
</dbReference>
<dbReference type="Pfam" id="PF01348">
    <property type="entry name" value="Intron_maturas2"/>
    <property type="match status" value="1"/>
</dbReference>
<dbReference type="Pfam" id="PF01824">
    <property type="entry name" value="MatK_N"/>
    <property type="match status" value="1"/>
</dbReference>
<protein>
    <recommendedName>
        <fullName evidence="1">Maturase K</fullName>
    </recommendedName>
    <alternativeName>
        <fullName evidence="1">Intron maturase</fullName>
    </alternativeName>
</protein>
<proteinExistence type="inferred from homology"/>
<comment type="function">
    <text evidence="1">Usually encoded in the trnK tRNA gene intron. Probably assists in splicing its own and other chloroplast group II introns.</text>
</comment>
<comment type="subcellular location">
    <subcellularLocation>
        <location>Plastid</location>
        <location>Chloroplast</location>
    </subcellularLocation>
</comment>
<comment type="similarity">
    <text evidence="1">Belongs to the intron maturase 2 family. MatK subfamily.</text>
</comment>
<evidence type="ECO:0000255" key="1">
    <source>
        <dbReference type="HAMAP-Rule" id="MF_01390"/>
    </source>
</evidence>
<geneLocation type="chloroplast"/>
<sequence>MEEIQRYLQLKRSQQHDFLYPLIFQEYIYAFAHDRDFGRSILSENLGSKSKSSLLVVKRLISRMYQQNRFILSLNDSNQNPFWTCNNNFDSQIISEGFALIGEIPFSLRFKSCLEEKNKVNSQSLRSIHSIFPFLEDNFSHLNYILDILITHPVHVEILVQNLRYWLKDASSLHLLRFLLNDYWNSLITPKKASSSFSKKNQRLFLFLYNSHVCEYEYFFVFIRKQSSHLLSTSYGVFLERIYCYEKVERLXNVFIKVKDLQANLWLVKEPCMHYVRYQRKFILASKGTSVLMNKWKCYLVTFWQWHFSLWFHPRRIYINQLSNHSLEFLGYLSSVRMNPSVVRSQILENSFLINNGIKKLETLVPIFLLITSLAKAKFCNVLGHPISKPVWADLSDSNIIDRFGRISRNLSHYYSGSSKKKSLYRVKYILRLSCARTLARKHKSTVRAFLKRLGSELLEEFLMSEEDILSLTFPKPSSTLRGVYRSRIWYLDIIWINDLANYKSKI</sequence>
<keyword id="KW-0150">Chloroplast</keyword>
<keyword id="KW-0507">mRNA processing</keyword>
<keyword id="KW-0934">Plastid</keyword>
<keyword id="KW-0694">RNA-binding</keyword>
<keyword id="KW-0819">tRNA processing</keyword>
<feature type="chain" id="PRO_0000143344" description="Maturase K">
    <location>
        <begin position="1"/>
        <end position="507"/>
    </location>
</feature>
<name>MATK_CRAPL</name>
<gene>
    <name evidence="1" type="primary">matK</name>
</gene>
<reference key="1">
    <citation type="journal article" date="2005" name="Plant Biol.">
        <title>The Linderniaceae and Gratiolaceae are further lineages distinct from the Scrophulariaceae (Lamiales).</title>
        <authorList>
            <person name="Ramanzadeh R."/>
            <person name="Mueller K.F."/>
            <person name="Fischer E."/>
            <person name="Bartels D."/>
            <person name="Borsch T."/>
        </authorList>
    </citation>
    <scope>NUCLEOTIDE SEQUENCE [GENOMIC DNA]</scope>
</reference>
<accession>Q5GAA8</accession>
<organism>
    <name type="scientific">Craterostigma plantagineum</name>
    <name type="common">Blue gem</name>
    <name type="synonym">Torenia plantagineum</name>
    <dbReference type="NCBI Taxonomy" id="4153"/>
    <lineage>
        <taxon>Eukaryota</taxon>
        <taxon>Viridiplantae</taxon>
        <taxon>Streptophyta</taxon>
        <taxon>Embryophyta</taxon>
        <taxon>Tracheophyta</taxon>
        <taxon>Spermatophyta</taxon>
        <taxon>Magnoliopsida</taxon>
        <taxon>eudicotyledons</taxon>
        <taxon>Gunneridae</taxon>
        <taxon>Pentapetalae</taxon>
        <taxon>asterids</taxon>
        <taxon>lamiids</taxon>
        <taxon>Lamiales</taxon>
        <taxon>Linderniaceae</taxon>
        <taxon>Craterostigma</taxon>
    </lineage>
</organism>